<sequence length="102" mass="11778">MFAIIKNGSKQFRVFEGQEIFVEKISLMEKSNYEFKEILAIGGKNNILGQPFVSGAKVQAQIIKHGRAKKIIVFKYKSKKKYRCKQGHRQNYTKLLITKIIA</sequence>
<accession>B3QZT4</accession>
<dbReference type="EMBL" id="CU469464">
    <property type="protein sequence ID" value="CAP18471.1"/>
    <property type="molecule type" value="Genomic_DNA"/>
</dbReference>
<dbReference type="SMR" id="B3QZT4"/>
<dbReference type="STRING" id="37692.ATP_00284"/>
<dbReference type="KEGG" id="pml:ATP_00284"/>
<dbReference type="eggNOG" id="COG0261">
    <property type="taxonomic scope" value="Bacteria"/>
</dbReference>
<dbReference type="HOGENOM" id="CLU_061463_3_2_14"/>
<dbReference type="Proteomes" id="UP000002020">
    <property type="component" value="Chromosome"/>
</dbReference>
<dbReference type="GO" id="GO:0005737">
    <property type="term" value="C:cytoplasm"/>
    <property type="evidence" value="ECO:0007669"/>
    <property type="project" value="UniProtKB-ARBA"/>
</dbReference>
<dbReference type="GO" id="GO:1990904">
    <property type="term" value="C:ribonucleoprotein complex"/>
    <property type="evidence" value="ECO:0007669"/>
    <property type="project" value="UniProtKB-KW"/>
</dbReference>
<dbReference type="GO" id="GO:0005840">
    <property type="term" value="C:ribosome"/>
    <property type="evidence" value="ECO:0007669"/>
    <property type="project" value="UniProtKB-KW"/>
</dbReference>
<dbReference type="GO" id="GO:0019843">
    <property type="term" value="F:rRNA binding"/>
    <property type="evidence" value="ECO:0007669"/>
    <property type="project" value="UniProtKB-UniRule"/>
</dbReference>
<dbReference type="GO" id="GO:0003735">
    <property type="term" value="F:structural constituent of ribosome"/>
    <property type="evidence" value="ECO:0007669"/>
    <property type="project" value="InterPro"/>
</dbReference>
<dbReference type="GO" id="GO:0006412">
    <property type="term" value="P:translation"/>
    <property type="evidence" value="ECO:0007669"/>
    <property type="project" value="UniProtKB-UniRule"/>
</dbReference>
<dbReference type="HAMAP" id="MF_01363">
    <property type="entry name" value="Ribosomal_bL21"/>
    <property type="match status" value="1"/>
</dbReference>
<dbReference type="InterPro" id="IPR028909">
    <property type="entry name" value="bL21-like"/>
</dbReference>
<dbReference type="InterPro" id="IPR036164">
    <property type="entry name" value="bL21-like_sf"/>
</dbReference>
<dbReference type="InterPro" id="IPR001787">
    <property type="entry name" value="Ribosomal_bL21"/>
</dbReference>
<dbReference type="InterPro" id="IPR018258">
    <property type="entry name" value="Ribosomal_bL21_CS"/>
</dbReference>
<dbReference type="NCBIfam" id="TIGR00061">
    <property type="entry name" value="L21"/>
    <property type="match status" value="1"/>
</dbReference>
<dbReference type="PANTHER" id="PTHR21349">
    <property type="entry name" value="50S RIBOSOMAL PROTEIN L21"/>
    <property type="match status" value="1"/>
</dbReference>
<dbReference type="PANTHER" id="PTHR21349:SF0">
    <property type="entry name" value="LARGE RIBOSOMAL SUBUNIT PROTEIN BL21M"/>
    <property type="match status" value="1"/>
</dbReference>
<dbReference type="Pfam" id="PF00829">
    <property type="entry name" value="Ribosomal_L21p"/>
    <property type="match status" value="1"/>
</dbReference>
<dbReference type="SUPFAM" id="SSF141091">
    <property type="entry name" value="L21p-like"/>
    <property type="match status" value="1"/>
</dbReference>
<dbReference type="PROSITE" id="PS01169">
    <property type="entry name" value="RIBOSOMAL_L21"/>
    <property type="match status" value="1"/>
</dbReference>
<name>RL21_PHYMT</name>
<comment type="function">
    <text evidence="1">This protein binds to 23S rRNA in the presence of protein L20.</text>
</comment>
<comment type="subunit">
    <text evidence="1">Part of the 50S ribosomal subunit. Contacts protein L20.</text>
</comment>
<comment type="similarity">
    <text evidence="1">Belongs to the bacterial ribosomal protein bL21 family.</text>
</comment>
<keyword id="KW-1185">Reference proteome</keyword>
<keyword id="KW-0687">Ribonucleoprotein</keyword>
<keyword id="KW-0689">Ribosomal protein</keyword>
<keyword id="KW-0694">RNA-binding</keyword>
<keyword id="KW-0699">rRNA-binding</keyword>
<feature type="chain" id="PRO_1000166735" description="Large ribosomal subunit protein bL21">
    <location>
        <begin position="1"/>
        <end position="102"/>
    </location>
</feature>
<gene>
    <name evidence="1" type="primary">rplU</name>
    <name type="ordered locus">ATP_00284</name>
</gene>
<reference key="1">
    <citation type="journal article" date="2008" name="BMC Genomics">
        <title>The linear chromosome of the plant-pathogenic mycoplasma 'Candidatus Phytoplasma mali'.</title>
        <authorList>
            <person name="Kube M."/>
            <person name="Schneider B."/>
            <person name="Kuhl H."/>
            <person name="Dandekar T."/>
            <person name="Heitmann K."/>
            <person name="Migdoll A.M."/>
            <person name="Reinhardt R."/>
            <person name="Seemueller E."/>
        </authorList>
    </citation>
    <scope>NUCLEOTIDE SEQUENCE [LARGE SCALE GENOMIC DNA]</scope>
    <source>
        <strain>AT</strain>
    </source>
</reference>
<organism>
    <name type="scientific">Phytoplasma mali (strain AT)</name>
    <dbReference type="NCBI Taxonomy" id="482235"/>
    <lineage>
        <taxon>Bacteria</taxon>
        <taxon>Bacillati</taxon>
        <taxon>Mycoplasmatota</taxon>
        <taxon>Mollicutes</taxon>
        <taxon>Acholeplasmatales</taxon>
        <taxon>Acholeplasmataceae</taxon>
        <taxon>Candidatus Phytoplasma</taxon>
        <taxon>16SrX (Apple proliferation group)</taxon>
    </lineage>
</organism>
<evidence type="ECO:0000255" key="1">
    <source>
        <dbReference type="HAMAP-Rule" id="MF_01363"/>
    </source>
</evidence>
<evidence type="ECO:0000305" key="2"/>
<proteinExistence type="inferred from homology"/>
<protein>
    <recommendedName>
        <fullName evidence="1">Large ribosomal subunit protein bL21</fullName>
    </recommendedName>
    <alternativeName>
        <fullName evidence="2">50S ribosomal protein L21</fullName>
    </alternativeName>
</protein>